<gene>
    <name evidence="1" type="primary">aqpZ</name>
    <name type="synonym">fjo22</name>
</gene>
<accession>Q7WVD3</accession>
<reference key="1">
    <citation type="submission" date="2003-07" db="EMBL/GenBank/DDBJ databases">
        <title>Cloning and characterization of the Flavobacterium johnsoniae gliding motility gene gldI.</title>
        <authorList>
            <person name="McBride M.J."/>
        </authorList>
    </citation>
    <scope>NUCLEOTIDE SEQUENCE [GENOMIC DNA]</scope>
</reference>
<evidence type="ECO:0000255" key="1">
    <source>
        <dbReference type="HAMAP-Rule" id="MF_01146"/>
    </source>
</evidence>
<evidence type="ECO:0000305" key="2"/>
<keyword id="KW-1003">Cell membrane</keyword>
<keyword id="KW-0472">Membrane</keyword>
<keyword id="KW-0812">Transmembrane</keyword>
<keyword id="KW-1133">Transmembrane helix</keyword>
<keyword id="KW-0813">Transport</keyword>
<protein>
    <recommendedName>
        <fullName evidence="1">Aquaporin Z</fullName>
    </recommendedName>
</protein>
<proteinExistence type="inferred from homology"/>
<dbReference type="EMBL" id="AF527792">
    <property type="protein sequence ID" value="AAQ02336.1"/>
    <property type="molecule type" value="Genomic_DNA"/>
</dbReference>
<dbReference type="SMR" id="Q7WVD3"/>
<dbReference type="GO" id="GO:0005886">
    <property type="term" value="C:plasma membrane"/>
    <property type="evidence" value="ECO:0007669"/>
    <property type="project" value="UniProtKB-SubCell"/>
</dbReference>
<dbReference type="GO" id="GO:0015267">
    <property type="term" value="F:channel activity"/>
    <property type="evidence" value="ECO:0007669"/>
    <property type="project" value="InterPro"/>
</dbReference>
<dbReference type="Gene3D" id="1.20.1080.10">
    <property type="entry name" value="Glycerol uptake facilitator protein"/>
    <property type="match status" value="1"/>
</dbReference>
<dbReference type="InterPro" id="IPR023271">
    <property type="entry name" value="Aquaporin-like"/>
</dbReference>
<dbReference type="InterPro" id="IPR034294">
    <property type="entry name" value="Aquaporin_transptr"/>
</dbReference>
<dbReference type="InterPro" id="IPR000425">
    <property type="entry name" value="MIP"/>
</dbReference>
<dbReference type="InterPro" id="IPR022357">
    <property type="entry name" value="MIP_CS"/>
</dbReference>
<dbReference type="PANTHER" id="PTHR45724:SF13">
    <property type="entry name" value="AQUAPORIN NIP1-1-RELATED"/>
    <property type="match status" value="1"/>
</dbReference>
<dbReference type="PANTHER" id="PTHR45724">
    <property type="entry name" value="AQUAPORIN NIP2-1"/>
    <property type="match status" value="1"/>
</dbReference>
<dbReference type="Pfam" id="PF00230">
    <property type="entry name" value="MIP"/>
    <property type="match status" value="1"/>
</dbReference>
<dbReference type="PRINTS" id="PR00783">
    <property type="entry name" value="MINTRINSICP"/>
</dbReference>
<dbReference type="SUPFAM" id="SSF81338">
    <property type="entry name" value="Aquaporin-like"/>
    <property type="match status" value="1"/>
</dbReference>
<dbReference type="PROSITE" id="PS00221">
    <property type="entry name" value="MIP"/>
    <property type="match status" value="1"/>
</dbReference>
<sequence length="79" mass="8159">MKKLFAEFFGTYWLVFGGCGSAVFAAGYPTLGIGFAGVALAFGLTVLTMAYAVGHISGGHFNPAVSFGLWAGGRFSAKD</sequence>
<comment type="function">
    <text evidence="1">Channel that permits osmotically driven movement of water in both directions. It is involved in the osmoregulation and in the maintenance of cell turgor during volume expansion in rapidly growing cells. It mediates rapid entry or exit of water in response to abrupt changes in osmolarity.</text>
</comment>
<comment type="catalytic activity">
    <reaction evidence="1">
        <text>H2O(in) = H2O(out)</text>
        <dbReference type="Rhea" id="RHEA:29667"/>
        <dbReference type="ChEBI" id="CHEBI:15377"/>
    </reaction>
    <physiologicalReaction direction="left-to-right" evidence="1">
        <dbReference type="Rhea" id="RHEA:29668"/>
    </physiologicalReaction>
    <physiologicalReaction direction="right-to-left" evidence="1">
        <dbReference type="Rhea" id="RHEA:29669"/>
    </physiologicalReaction>
</comment>
<comment type="subunit">
    <text evidence="1">Homotetramer.</text>
</comment>
<comment type="subcellular location">
    <subcellularLocation>
        <location evidence="1">Cell membrane</location>
        <topology evidence="1">Multi-pass membrane protein</topology>
    </subcellularLocation>
</comment>
<comment type="similarity">
    <text evidence="1 2">Belongs to the MIP/aquaporin (TC 1.A.8) family.</text>
</comment>
<organism>
    <name type="scientific">Flavobacterium johnsoniae</name>
    <name type="common">Cytophaga johnsonae</name>
    <dbReference type="NCBI Taxonomy" id="986"/>
    <lineage>
        <taxon>Bacteria</taxon>
        <taxon>Pseudomonadati</taxon>
        <taxon>Bacteroidota</taxon>
        <taxon>Flavobacteriia</taxon>
        <taxon>Flavobacteriales</taxon>
        <taxon>Flavobacteriaceae</taxon>
        <taxon>Flavobacterium</taxon>
    </lineage>
</organism>
<feature type="chain" id="PRO_0000063988" description="Aquaporin Z">
    <location>
        <begin position="1"/>
        <end position="79" status="greater than"/>
    </location>
</feature>
<feature type="transmembrane region" description="Helical" evidence="1">
    <location>
        <begin position="4"/>
        <end position="24"/>
    </location>
</feature>
<feature type="transmembrane region" description="Helical" evidence="1">
    <location>
        <begin position="33"/>
        <end position="53"/>
    </location>
</feature>
<feature type="short sequence motif" description="NPA 1" evidence="1">
    <location>
        <begin position="62"/>
        <end position="64"/>
    </location>
</feature>
<feature type="site" description="Involved in tetramerization or stability of the tetramer" evidence="1">
    <location>
        <position position="19"/>
    </location>
</feature>
<feature type="site" description="Selectivity filter" evidence="1">
    <location>
        <position position="42"/>
    </location>
</feature>
<feature type="non-terminal residue">
    <location>
        <position position="79"/>
    </location>
</feature>
<name>AQPZ_FLAJO</name>